<protein>
    <recommendedName>
        <fullName evidence="1">Large ribosomal subunit protein bL32</fullName>
    </recommendedName>
    <alternativeName>
        <fullName evidence="3">50S ribosomal protein L32</fullName>
    </alternativeName>
</protein>
<gene>
    <name evidence="1" type="primary">rpmF</name>
    <name type="ordered locus">XC_3230</name>
</gene>
<feature type="chain" id="PRO_0000225778" description="Large ribosomal subunit protein bL32">
    <location>
        <begin position="1"/>
        <end position="64"/>
    </location>
</feature>
<feature type="region of interest" description="Disordered" evidence="2">
    <location>
        <begin position="1"/>
        <end position="35"/>
    </location>
</feature>
<comment type="similarity">
    <text evidence="1">Belongs to the bacterial ribosomal protein bL32 family.</text>
</comment>
<sequence>MAVQKSRVTPSRRGQRRSHDALTAKQLSTDPTSGEIHLRHHITADGYYRGKKVITTKSSAVQED</sequence>
<name>RL32_XANC8</name>
<reference key="1">
    <citation type="journal article" date="2005" name="Genome Res.">
        <title>Comparative and functional genomic analyses of the pathogenicity of phytopathogen Xanthomonas campestris pv. campestris.</title>
        <authorList>
            <person name="Qian W."/>
            <person name="Jia Y."/>
            <person name="Ren S.-X."/>
            <person name="He Y.-Q."/>
            <person name="Feng J.-X."/>
            <person name="Lu L.-F."/>
            <person name="Sun Q."/>
            <person name="Ying G."/>
            <person name="Tang D.-J."/>
            <person name="Tang H."/>
            <person name="Wu W."/>
            <person name="Hao P."/>
            <person name="Wang L."/>
            <person name="Jiang B.-L."/>
            <person name="Zeng S."/>
            <person name="Gu W.-Y."/>
            <person name="Lu G."/>
            <person name="Rong L."/>
            <person name="Tian Y."/>
            <person name="Yao Z."/>
            <person name="Fu G."/>
            <person name="Chen B."/>
            <person name="Fang R."/>
            <person name="Qiang B."/>
            <person name="Chen Z."/>
            <person name="Zhao G.-P."/>
            <person name="Tang J.-L."/>
            <person name="He C."/>
        </authorList>
    </citation>
    <scope>NUCLEOTIDE SEQUENCE [LARGE SCALE GENOMIC DNA]</scope>
    <source>
        <strain>8004</strain>
    </source>
</reference>
<proteinExistence type="inferred from homology"/>
<accession>Q4URP9</accession>
<keyword id="KW-0687">Ribonucleoprotein</keyword>
<keyword id="KW-0689">Ribosomal protein</keyword>
<evidence type="ECO:0000255" key="1">
    <source>
        <dbReference type="HAMAP-Rule" id="MF_00340"/>
    </source>
</evidence>
<evidence type="ECO:0000256" key="2">
    <source>
        <dbReference type="SAM" id="MobiDB-lite"/>
    </source>
</evidence>
<evidence type="ECO:0000305" key="3"/>
<organism>
    <name type="scientific">Xanthomonas campestris pv. campestris (strain 8004)</name>
    <dbReference type="NCBI Taxonomy" id="314565"/>
    <lineage>
        <taxon>Bacteria</taxon>
        <taxon>Pseudomonadati</taxon>
        <taxon>Pseudomonadota</taxon>
        <taxon>Gammaproteobacteria</taxon>
        <taxon>Lysobacterales</taxon>
        <taxon>Lysobacteraceae</taxon>
        <taxon>Xanthomonas</taxon>
    </lineage>
</organism>
<dbReference type="EMBL" id="CP000050">
    <property type="protein sequence ID" value="AAY50274.1"/>
    <property type="molecule type" value="Genomic_DNA"/>
</dbReference>
<dbReference type="RefSeq" id="WP_010368401.1">
    <property type="nucleotide sequence ID" value="NZ_CP155948.1"/>
</dbReference>
<dbReference type="SMR" id="Q4URP9"/>
<dbReference type="GeneID" id="97210654"/>
<dbReference type="KEGG" id="xcb:XC_3230"/>
<dbReference type="HOGENOM" id="CLU_129084_2_1_6"/>
<dbReference type="Proteomes" id="UP000000420">
    <property type="component" value="Chromosome"/>
</dbReference>
<dbReference type="GO" id="GO:0015934">
    <property type="term" value="C:large ribosomal subunit"/>
    <property type="evidence" value="ECO:0007669"/>
    <property type="project" value="InterPro"/>
</dbReference>
<dbReference type="GO" id="GO:0003735">
    <property type="term" value="F:structural constituent of ribosome"/>
    <property type="evidence" value="ECO:0007669"/>
    <property type="project" value="InterPro"/>
</dbReference>
<dbReference type="GO" id="GO:0006412">
    <property type="term" value="P:translation"/>
    <property type="evidence" value="ECO:0007669"/>
    <property type="project" value="UniProtKB-UniRule"/>
</dbReference>
<dbReference type="HAMAP" id="MF_00340">
    <property type="entry name" value="Ribosomal_bL32"/>
    <property type="match status" value="1"/>
</dbReference>
<dbReference type="InterPro" id="IPR002677">
    <property type="entry name" value="Ribosomal_bL32"/>
</dbReference>
<dbReference type="InterPro" id="IPR044957">
    <property type="entry name" value="Ribosomal_bL32_bact"/>
</dbReference>
<dbReference type="InterPro" id="IPR011332">
    <property type="entry name" value="Ribosomal_zn-bd"/>
</dbReference>
<dbReference type="NCBIfam" id="TIGR01031">
    <property type="entry name" value="rpmF_bact"/>
    <property type="match status" value="1"/>
</dbReference>
<dbReference type="PANTHER" id="PTHR35534">
    <property type="entry name" value="50S RIBOSOMAL PROTEIN L32"/>
    <property type="match status" value="1"/>
</dbReference>
<dbReference type="PANTHER" id="PTHR35534:SF1">
    <property type="entry name" value="LARGE RIBOSOMAL SUBUNIT PROTEIN BL32"/>
    <property type="match status" value="1"/>
</dbReference>
<dbReference type="Pfam" id="PF01783">
    <property type="entry name" value="Ribosomal_L32p"/>
    <property type="match status" value="1"/>
</dbReference>
<dbReference type="SUPFAM" id="SSF57829">
    <property type="entry name" value="Zn-binding ribosomal proteins"/>
    <property type="match status" value="1"/>
</dbReference>